<feature type="chain" id="PRO_1000203514" description="Phosphoserine aminotransferase">
    <location>
        <begin position="1"/>
        <end position="361"/>
    </location>
</feature>
<feature type="binding site" evidence="1">
    <location>
        <position position="42"/>
    </location>
    <ligand>
        <name>L-glutamate</name>
        <dbReference type="ChEBI" id="CHEBI:29985"/>
    </ligand>
</feature>
<feature type="binding site" evidence="1">
    <location>
        <begin position="76"/>
        <end position="77"/>
    </location>
    <ligand>
        <name>pyridoxal 5'-phosphate</name>
        <dbReference type="ChEBI" id="CHEBI:597326"/>
    </ligand>
</feature>
<feature type="binding site" evidence="1">
    <location>
        <position position="102"/>
    </location>
    <ligand>
        <name>pyridoxal 5'-phosphate</name>
        <dbReference type="ChEBI" id="CHEBI:597326"/>
    </ligand>
</feature>
<feature type="binding site" evidence="1">
    <location>
        <position position="153"/>
    </location>
    <ligand>
        <name>pyridoxal 5'-phosphate</name>
        <dbReference type="ChEBI" id="CHEBI:597326"/>
    </ligand>
</feature>
<feature type="binding site" evidence="1">
    <location>
        <position position="173"/>
    </location>
    <ligand>
        <name>pyridoxal 5'-phosphate</name>
        <dbReference type="ChEBI" id="CHEBI:597326"/>
    </ligand>
</feature>
<feature type="binding site" evidence="1">
    <location>
        <position position="196"/>
    </location>
    <ligand>
        <name>pyridoxal 5'-phosphate</name>
        <dbReference type="ChEBI" id="CHEBI:597326"/>
    </ligand>
</feature>
<feature type="binding site" evidence="1">
    <location>
        <begin position="238"/>
        <end position="239"/>
    </location>
    <ligand>
        <name>pyridoxal 5'-phosphate</name>
        <dbReference type="ChEBI" id="CHEBI:597326"/>
    </ligand>
</feature>
<feature type="modified residue" description="N6-(pyridoxal phosphate)lysine" evidence="1">
    <location>
        <position position="197"/>
    </location>
</feature>
<accession>B8D9A2</accession>
<evidence type="ECO:0000255" key="1">
    <source>
        <dbReference type="HAMAP-Rule" id="MF_00160"/>
    </source>
</evidence>
<keyword id="KW-0028">Amino-acid biosynthesis</keyword>
<keyword id="KW-0032">Aminotransferase</keyword>
<keyword id="KW-0963">Cytoplasm</keyword>
<keyword id="KW-0663">Pyridoxal phosphate</keyword>
<keyword id="KW-0664">Pyridoxine biosynthesis</keyword>
<keyword id="KW-0718">Serine biosynthesis</keyword>
<keyword id="KW-0808">Transferase</keyword>
<sequence length="361" mass="41310">MNLIYNFSAGPAMIPRDVLNQAKKELHNWKNLGSSIMEISHRSEEFIQMALEAEKDLRDLLKIPDSFKVLFCQGGARGQFSAIPMNLLNNLQTADYINSGYWSNSAFMEAKKYCTPRSIFIRETNGVKESLLPMHKWNINENSAYIHYCPNETIDGLSIYEEPVFENKIVVGDFSSFILSRSINIKNYDLIYAGAQKNIGPAGITIIIIRKNIIGYSSKMTPSILDYKKISDHHSMFNTPPTFAWYLSGLVFKWLKKQGGLKAIEKLNKKKSDLLYKKIDNSDFYINKINSKHRSQMNVVFHLVNPKLNYIFLKEASKTGLNYLRGHSIVGGMRASLYNAMPLEGVESLVKFMSYFEKRYG</sequence>
<dbReference type="EC" id="2.6.1.52" evidence="1"/>
<dbReference type="EMBL" id="CP001161">
    <property type="protein sequence ID" value="ACL30673.1"/>
    <property type="molecule type" value="Genomic_DNA"/>
</dbReference>
<dbReference type="RefSeq" id="WP_009874266.1">
    <property type="nucleotide sequence ID" value="NC_011833.1"/>
</dbReference>
<dbReference type="SMR" id="B8D9A2"/>
<dbReference type="KEGG" id="bap:BUAP5A_305"/>
<dbReference type="HOGENOM" id="CLU_034866_0_2_6"/>
<dbReference type="OrthoDB" id="9809412at2"/>
<dbReference type="UniPathway" id="UPA00135">
    <property type="reaction ID" value="UER00197"/>
</dbReference>
<dbReference type="UniPathway" id="UPA00244">
    <property type="reaction ID" value="UER00311"/>
</dbReference>
<dbReference type="Proteomes" id="UP000006904">
    <property type="component" value="Chromosome"/>
</dbReference>
<dbReference type="GO" id="GO:0005737">
    <property type="term" value="C:cytoplasm"/>
    <property type="evidence" value="ECO:0007669"/>
    <property type="project" value="UniProtKB-SubCell"/>
</dbReference>
<dbReference type="GO" id="GO:0004648">
    <property type="term" value="F:O-phospho-L-serine:2-oxoglutarate aminotransferase activity"/>
    <property type="evidence" value="ECO:0007669"/>
    <property type="project" value="UniProtKB-UniRule"/>
</dbReference>
<dbReference type="GO" id="GO:0030170">
    <property type="term" value="F:pyridoxal phosphate binding"/>
    <property type="evidence" value="ECO:0007669"/>
    <property type="project" value="UniProtKB-UniRule"/>
</dbReference>
<dbReference type="GO" id="GO:0006564">
    <property type="term" value="P:L-serine biosynthetic process"/>
    <property type="evidence" value="ECO:0007669"/>
    <property type="project" value="UniProtKB-UniRule"/>
</dbReference>
<dbReference type="GO" id="GO:0008615">
    <property type="term" value="P:pyridoxine biosynthetic process"/>
    <property type="evidence" value="ECO:0007669"/>
    <property type="project" value="UniProtKB-UniRule"/>
</dbReference>
<dbReference type="FunFam" id="3.40.640.10:FF:000010">
    <property type="entry name" value="Phosphoserine aminotransferase"/>
    <property type="match status" value="1"/>
</dbReference>
<dbReference type="FunFam" id="3.90.1150.10:FF:000006">
    <property type="entry name" value="Phosphoserine aminotransferase"/>
    <property type="match status" value="1"/>
</dbReference>
<dbReference type="Gene3D" id="3.90.1150.10">
    <property type="entry name" value="Aspartate Aminotransferase, domain 1"/>
    <property type="match status" value="1"/>
</dbReference>
<dbReference type="Gene3D" id="3.40.640.10">
    <property type="entry name" value="Type I PLP-dependent aspartate aminotransferase-like (Major domain)"/>
    <property type="match status" value="1"/>
</dbReference>
<dbReference type="HAMAP" id="MF_00160">
    <property type="entry name" value="SerC_aminotrans_5"/>
    <property type="match status" value="1"/>
</dbReference>
<dbReference type="InterPro" id="IPR000192">
    <property type="entry name" value="Aminotrans_V_dom"/>
</dbReference>
<dbReference type="InterPro" id="IPR020578">
    <property type="entry name" value="Aminotrans_V_PyrdxlP_BS"/>
</dbReference>
<dbReference type="InterPro" id="IPR022278">
    <property type="entry name" value="Pser_aminoTfrase"/>
</dbReference>
<dbReference type="InterPro" id="IPR015424">
    <property type="entry name" value="PyrdxlP-dep_Trfase"/>
</dbReference>
<dbReference type="InterPro" id="IPR015421">
    <property type="entry name" value="PyrdxlP-dep_Trfase_major"/>
</dbReference>
<dbReference type="InterPro" id="IPR015422">
    <property type="entry name" value="PyrdxlP-dep_Trfase_small"/>
</dbReference>
<dbReference type="NCBIfam" id="NF003764">
    <property type="entry name" value="PRK05355.1"/>
    <property type="match status" value="1"/>
</dbReference>
<dbReference type="NCBIfam" id="TIGR01364">
    <property type="entry name" value="serC_1"/>
    <property type="match status" value="1"/>
</dbReference>
<dbReference type="PANTHER" id="PTHR43247">
    <property type="entry name" value="PHOSPHOSERINE AMINOTRANSFERASE"/>
    <property type="match status" value="1"/>
</dbReference>
<dbReference type="PANTHER" id="PTHR43247:SF1">
    <property type="entry name" value="PHOSPHOSERINE AMINOTRANSFERASE"/>
    <property type="match status" value="1"/>
</dbReference>
<dbReference type="Pfam" id="PF00266">
    <property type="entry name" value="Aminotran_5"/>
    <property type="match status" value="1"/>
</dbReference>
<dbReference type="PIRSF" id="PIRSF000525">
    <property type="entry name" value="SerC"/>
    <property type="match status" value="1"/>
</dbReference>
<dbReference type="SUPFAM" id="SSF53383">
    <property type="entry name" value="PLP-dependent transferases"/>
    <property type="match status" value="1"/>
</dbReference>
<dbReference type="PROSITE" id="PS00595">
    <property type="entry name" value="AA_TRANSFER_CLASS_5"/>
    <property type="match status" value="1"/>
</dbReference>
<name>SERC_BUCA5</name>
<organism>
    <name type="scientific">Buchnera aphidicola subsp. Acyrthosiphon pisum (strain 5A)</name>
    <dbReference type="NCBI Taxonomy" id="563178"/>
    <lineage>
        <taxon>Bacteria</taxon>
        <taxon>Pseudomonadati</taxon>
        <taxon>Pseudomonadota</taxon>
        <taxon>Gammaproteobacteria</taxon>
        <taxon>Enterobacterales</taxon>
        <taxon>Erwiniaceae</taxon>
        <taxon>Buchnera</taxon>
    </lineage>
</organism>
<proteinExistence type="inferred from homology"/>
<comment type="function">
    <text evidence="1">Catalyzes the reversible conversion of 3-phosphohydroxypyruvate to phosphoserine and of 3-hydroxy-2-oxo-4-phosphonooxybutanoate to phosphohydroxythreonine.</text>
</comment>
<comment type="catalytic activity">
    <reaction evidence="1">
        <text>O-phospho-L-serine + 2-oxoglutarate = 3-phosphooxypyruvate + L-glutamate</text>
        <dbReference type="Rhea" id="RHEA:14329"/>
        <dbReference type="ChEBI" id="CHEBI:16810"/>
        <dbReference type="ChEBI" id="CHEBI:18110"/>
        <dbReference type="ChEBI" id="CHEBI:29985"/>
        <dbReference type="ChEBI" id="CHEBI:57524"/>
        <dbReference type="EC" id="2.6.1.52"/>
    </reaction>
</comment>
<comment type="catalytic activity">
    <reaction evidence="1">
        <text>4-(phosphooxy)-L-threonine + 2-oxoglutarate = (R)-3-hydroxy-2-oxo-4-phosphooxybutanoate + L-glutamate</text>
        <dbReference type="Rhea" id="RHEA:16573"/>
        <dbReference type="ChEBI" id="CHEBI:16810"/>
        <dbReference type="ChEBI" id="CHEBI:29985"/>
        <dbReference type="ChEBI" id="CHEBI:58452"/>
        <dbReference type="ChEBI" id="CHEBI:58538"/>
        <dbReference type="EC" id="2.6.1.52"/>
    </reaction>
</comment>
<comment type="cofactor">
    <cofactor evidence="1">
        <name>pyridoxal 5'-phosphate</name>
        <dbReference type="ChEBI" id="CHEBI:597326"/>
    </cofactor>
    <text evidence="1">Binds 1 pyridoxal phosphate per subunit.</text>
</comment>
<comment type="pathway">
    <text evidence="1">Amino-acid biosynthesis; L-serine biosynthesis; L-serine from 3-phospho-D-glycerate: step 2/3.</text>
</comment>
<comment type="pathway">
    <text evidence="1">Cofactor biosynthesis; pyridoxine 5'-phosphate biosynthesis; pyridoxine 5'-phosphate from D-erythrose 4-phosphate: step 3/5.</text>
</comment>
<comment type="subunit">
    <text evidence="1">Homodimer.</text>
</comment>
<comment type="subcellular location">
    <subcellularLocation>
        <location evidence="1">Cytoplasm</location>
    </subcellularLocation>
</comment>
<comment type="similarity">
    <text evidence="1">Belongs to the class-V pyridoxal-phosphate-dependent aminotransferase family. SerC subfamily.</text>
</comment>
<protein>
    <recommendedName>
        <fullName evidence="1">Phosphoserine aminotransferase</fullName>
        <ecNumber evidence="1">2.6.1.52</ecNumber>
    </recommendedName>
    <alternativeName>
        <fullName evidence="1">Phosphohydroxythreonine aminotransferase</fullName>
        <shortName evidence="1">PSAT</shortName>
    </alternativeName>
</protein>
<gene>
    <name evidence="1" type="primary">serC</name>
    <name type="ordered locus">BUAP5A_305</name>
</gene>
<reference key="1">
    <citation type="journal article" date="2009" name="Science">
        <title>The dynamics and time scale of ongoing genomic erosion in symbiotic bacteria.</title>
        <authorList>
            <person name="Moran N.A."/>
            <person name="McLaughlin H.J."/>
            <person name="Sorek R."/>
        </authorList>
    </citation>
    <scope>NUCLEOTIDE SEQUENCE [LARGE SCALE GENOMIC DNA]</scope>
    <source>
        <strain>5A</strain>
    </source>
</reference>